<sequence>MTKNIHDQRILILDFGSQYTQLVARRVREIGVYCELWSWDVEEADIREFNPDGIILSGGPESVTEANSPRAPQYVFDSGVPVFGVCYGMQTMAEQLGGRVATSDEREFGYAQVKISGESALFKDLDLTQDVWMSHGDKVVEIPADFVKIGETDTCPYAAMANEEKKYYGVQFHPEVTHTKNGLQMLENFVLGVCGCERLWTSESIIEDAVARIKEQVGNDEVILGLSGGVDSSVVAMLVHRAIGSKLTCVFVDNGLLRLNEGEQVMEMFGDKFGLNIIKVDAEERFLKALEGIDEPEAKRKTIGRVFVEVFDEESKKLSNAKWLAQGTIYPDVIESAASKTGKAHVIKSHHNVGGLPDDMKMGLVEPLRELFKDEVRKIGLELGLPYNMLYRHPFPGPGLGVRVLGEVKKEYCDLLRRADAIFIEELHAADLYNKVSQAFTVFLPVRSVGVMGDGRKYDWVVSLRAVETIDFMTAHWAHLPYEFLGKVSNRIINEVNGISRVVYDISGKPPATIEWE</sequence>
<comment type="function">
    <text evidence="1">Catalyzes the synthesis of GMP from XMP.</text>
</comment>
<comment type="catalytic activity">
    <reaction evidence="1">
        <text>XMP + L-glutamine + ATP + H2O = GMP + L-glutamate + AMP + diphosphate + 2 H(+)</text>
        <dbReference type="Rhea" id="RHEA:11680"/>
        <dbReference type="ChEBI" id="CHEBI:15377"/>
        <dbReference type="ChEBI" id="CHEBI:15378"/>
        <dbReference type="ChEBI" id="CHEBI:29985"/>
        <dbReference type="ChEBI" id="CHEBI:30616"/>
        <dbReference type="ChEBI" id="CHEBI:33019"/>
        <dbReference type="ChEBI" id="CHEBI:57464"/>
        <dbReference type="ChEBI" id="CHEBI:58115"/>
        <dbReference type="ChEBI" id="CHEBI:58359"/>
        <dbReference type="ChEBI" id="CHEBI:456215"/>
        <dbReference type="EC" id="6.3.5.2"/>
    </reaction>
</comment>
<comment type="pathway">
    <text evidence="1">Purine metabolism; GMP biosynthesis; GMP from XMP (L-Gln route): step 1/1.</text>
</comment>
<comment type="subunit">
    <text evidence="1">Homodimer.</text>
</comment>
<organism>
    <name type="scientific">Vibrio cholerae serotype O1 (strain ATCC 39541 / Classical Ogawa 395 / O395)</name>
    <dbReference type="NCBI Taxonomy" id="345073"/>
    <lineage>
        <taxon>Bacteria</taxon>
        <taxon>Pseudomonadati</taxon>
        <taxon>Pseudomonadota</taxon>
        <taxon>Gammaproteobacteria</taxon>
        <taxon>Vibrionales</taxon>
        <taxon>Vibrionaceae</taxon>
        <taxon>Vibrio</taxon>
    </lineage>
</organism>
<gene>
    <name evidence="1" type="primary">guaA</name>
    <name type="ordered locus">VC0395_A0297</name>
    <name type="ordered locus">VC395_0785</name>
</gene>
<dbReference type="EC" id="6.3.5.2" evidence="1"/>
<dbReference type="EMBL" id="CP000627">
    <property type="protein sequence ID" value="ABQ21923.1"/>
    <property type="molecule type" value="Genomic_DNA"/>
</dbReference>
<dbReference type="EMBL" id="CP001235">
    <property type="protein sequence ID" value="ACP08802.1"/>
    <property type="molecule type" value="Genomic_DNA"/>
</dbReference>
<dbReference type="RefSeq" id="WP_000164597.1">
    <property type="nucleotide sequence ID" value="NZ_JAACZH010000017.1"/>
</dbReference>
<dbReference type="SMR" id="A5F3F1"/>
<dbReference type="KEGG" id="vco:VC0395_A0297"/>
<dbReference type="KEGG" id="vcr:VC395_0785"/>
<dbReference type="PATRIC" id="fig|345073.21.peg.759"/>
<dbReference type="eggNOG" id="COG0518">
    <property type="taxonomic scope" value="Bacteria"/>
</dbReference>
<dbReference type="eggNOG" id="COG0519">
    <property type="taxonomic scope" value="Bacteria"/>
</dbReference>
<dbReference type="HOGENOM" id="CLU_014340_0_5_6"/>
<dbReference type="OrthoDB" id="9802219at2"/>
<dbReference type="UniPathway" id="UPA00189">
    <property type="reaction ID" value="UER00296"/>
</dbReference>
<dbReference type="Proteomes" id="UP000000249">
    <property type="component" value="Chromosome 2"/>
</dbReference>
<dbReference type="GO" id="GO:0005829">
    <property type="term" value="C:cytosol"/>
    <property type="evidence" value="ECO:0007669"/>
    <property type="project" value="TreeGrafter"/>
</dbReference>
<dbReference type="GO" id="GO:0005524">
    <property type="term" value="F:ATP binding"/>
    <property type="evidence" value="ECO:0007669"/>
    <property type="project" value="UniProtKB-UniRule"/>
</dbReference>
<dbReference type="GO" id="GO:0003921">
    <property type="term" value="F:GMP synthase activity"/>
    <property type="evidence" value="ECO:0007669"/>
    <property type="project" value="InterPro"/>
</dbReference>
<dbReference type="CDD" id="cd01742">
    <property type="entry name" value="GATase1_GMP_Synthase"/>
    <property type="match status" value="1"/>
</dbReference>
<dbReference type="CDD" id="cd01997">
    <property type="entry name" value="GMP_synthase_C"/>
    <property type="match status" value="1"/>
</dbReference>
<dbReference type="FunFam" id="3.30.300.10:FF:000002">
    <property type="entry name" value="GMP synthase [glutamine-hydrolyzing]"/>
    <property type="match status" value="1"/>
</dbReference>
<dbReference type="FunFam" id="3.40.50.620:FF:000001">
    <property type="entry name" value="GMP synthase [glutamine-hydrolyzing]"/>
    <property type="match status" value="1"/>
</dbReference>
<dbReference type="FunFam" id="3.40.50.880:FF:000001">
    <property type="entry name" value="GMP synthase [glutamine-hydrolyzing]"/>
    <property type="match status" value="1"/>
</dbReference>
<dbReference type="Gene3D" id="3.30.300.10">
    <property type="match status" value="1"/>
</dbReference>
<dbReference type="Gene3D" id="3.40.50.880">
    <property type="match status" value="1"/>
</dbReference>
<dbReference type="Gene3D" id="3.40.50.620">
    <property type="entry name" value="HUPs"/>
    <property type="match status" value="1"/>
</dbReference>
<dbReference type="HAMAP" id="MF_00344">
    <property type="entry name" value="GMP_synthase"/>
    <property type="match status" value="1"/>
</dbReference>
<dbReference type="InterPro" id="IPR029062">
    <property type="entry name" value="Class_I_gatase-like"/>
</dbReference>
<dbReference type="InterPro" id="IPR017926">
    <property type="entry name" value="GATASE"/>
</dbReference>
<dbReference type="InterPro" id="IPR001674">
    <property type="entry name" value="GMP_synth_C"/>
</dbReference>
<dbReference type="InterPro" id="IPR004739">
    <property type="entry name" value="GMP_synth_GATase"/>
</dbReference>
<dbReference type="InterPro" id="IPR022955">
    <property type="entry name" value="GMP_synthase"/>
</dbReference>
<dbReference type="InterPro" id="IPR025777">
    <property type="entry name" value="GMPS_ATP_PPase_dom"/>
</dbReference>
<dbReference type="InterPro" id="IPR022310">
    <property type="entry name" value="NAD/GMP_synthase"/>
</dbReference>
<dbReference type="InterPro" id="IPR014729">
    <property type="entry name" value="Rossmann-like_a/b/a_fold"/>
</dbReference>
<dbReference type="NCBIfam" id="TIGR00884">
    <property type="entry name" value="guaA_Cterm"/>
    <property type="match status" value="1"/>
</dbReference>
<dbReference type="NCBIfam" id="TIGR00888">
    <property type="entry name" value="guaA_Nterm"/>
    <property type="match status" value="1"/>
</dbReference>
<dbReference type="NCBIfam" id="NF000848">
    <property type="entry name" value="PRK00074.1"/>
    <property type="match status" value="1"/>
</dbReference>
<dbReference type="PANTHER" id="PTHR11922:SF2">
    <property type="entry name" value="GMP SYNTHASE [GLUTAMINE-HYDROLYZING]"/>
    <property type="match status" value="1"/>
</dbReference>
<dbReference type="PANTHER" id="PTHR11922">
    <property type="entry name" value="GMP SYNTHASE-RELATED"/>
    <property type="match status" value="1"/>
</dbReference>
<dbReference type="Pfam" id="PF00117">
    <property type="entry name" value="GATase"/>
    <property type="match status" value="1"/>
</dbReference>
<dbReference type="Pfam" id="PF00958">
    <property type="entry name" value="GMP_synt_C"/>
    <property type="match status" value="1"/>
</dbReference>
<dbReference type="Pfam" id="PF02540">
    <property type="entry name" value="NAD_synthase"/>
    <property type="match status" value="1"/>
</dbReference>
<dbReference type="PRINTS" id="PR00097">
    <property type="entry name" value="ANTSNTHASEII"/>
</dbReference>
<dbReference type="PRINTS" id="PR00099">
    <property type="entry name" value="CPSGATASE"/>
</dbReference>
<dbReference type="PRINTS" id="PR00096">
    <property type="entry name" value="GATASE"/>
</dbReference>
<dbReference type="SUPFAM" id="SSF52402">
    <property type="entry name" value="Adenine nucleotide alpha hydrolases-like"/>
    <property type="match status" value="1"/>
</dbReference>
<dbReference type="SUPFAM" id="SSF52317">
    <property type="entry name" value="Class I glutamine amidotransferase-like"/>
    <property type="match status" value="1"/>
</dbReference>
<dbReference type="SUPFAM" id="SSF54810">
    <property type="entry name" value="GMP synthetase C-terminal dimerisation domain"/>
    <property type="match status" value="1"/>
</dbReference>
<dbReference type="PROSITE" id="PS51273">
    <property type="entry name" value="GATASE_TYPE_1"/>
    <property type="match status" value="1"/>
</dbReference>
<dbReference type="PROSITE" id="PS51553">
    <property type="entry name" value="GMPS_ATP_PPASE"/>
    <property type="match status" value="1"/>
</dbReference>
<feature type="chain" id="PRO_1000120448" description="GMP synthase [glutamine-hydrolyzing]">
    <location>
        <begin position="1"/>
        <end position="517"/>
    </location>
</feature>
<feature type="domain" description="Glutamine amidotransferase type-1" evidence="1">
    <location>
        <begin position="9"/>
        <end position="199"/>
    </location>
</feature>
<feature type="domain" description="GMPS ATP-PPase" evidence="1">
    <location>
        <begin position="200"/>
        <end position="392"/>
    </location>
</feature>
<feature type="active site" description="Nucleophile" evidence="1">
    <location>
        <position position="86"/>
    </location>
</feature>
<feature type="active site" evidence="1">
    <location>
        <position position="173"/>
    </location>
</feature>
<feature type="active site" evidence="1">
    <location>
        <position position="175"/>
    </location>
</feature>
<feature type="binding site" evidence="1">
    <location>
        <begin position="227"/>
        <end position="233"/>
    </location>
    <ligand>
        <name>ATP</name>
        <dbReference type="ChEBI" id="CHEBI:30616"/>
    </ligand>
</feature>
<keyword id="KW-0067">ATP-binding</keyword>
<keyword id="KW-0315">Glutamine amidotransferase</keyword>
<keyword id="KW-0332">GMP biosynthesis</keyword>
<keyword id="KW-0436">Ligase</keyword>
<keyword id="KW-0547">Nucleotide-binding</keyword>
<keyword id="KW-0658">Purine biosynthesis</keyword>
<proteinExistence type="inferred from homology"/>
<accession>A5F3F1</accession>
<accession>C3LYD6</accession>
<evidence type="ECO:0000255" key="1">
    <source>
        <dbReference type="HAMAP-Rule" id="MF_00344"/>
    </source>
</evidence>
<reference key="1">
    <citation type="submission" date="2007-03" db="EMBL/GenBank/DDBJ databases">
        <authorList>
            <person name="Heidelberg J."/>
        </authorList>
    </citation>
    <scope>NUCLEOTIDE SEQUENCE [LARGE SCALE GENOMIC DNA]</scope>
    <source>
        <strain>ATCC 39541 / Classical Ogawa 395 / O395</strain>
    </source>
</reference>
<reference key="2">
    <citation type="journal article" date="2008" name="PLoS ONE">
        <title>A recalibrated molecular clock and independent origins for the cholera pandemic clones.</title>
        <authorList>
            <person name="Feng L."/>
            <person name="Reeves P.R."/>
            <person name="Lan R."/>
            <person name="Ren Y."/>
            <person name="Gao C."/>
            <person name="Zhou Z."/>
            <person name="Ren Y."/>
            <person name="Cheng J."/>
            <person name="Wang W."/>
            <person name="Wang J."/>
            <person name="Qian W."/>
            <person name="Li D."/>
            <person name="Wang L."/>
        </authorList>
    </citation>
    <scope>NUCLEOTIDE SEQUENCE [LARGE SCALE GENOMIC DNA]</scope>
    <source>
        <strain>ATCC 39541 / Classical Ogawa 395 / O395</strain>
    </source>
</reference>
<protein>
    <recommendedName>
        <fullName evidence="1">GMP synthase [glutamine-hydrolyzing]</fullName>
        <ecNumber evidence="1">6.3.5.2</ecNumber>
    </recommendedName>
    <alternativeName>
        <fullName evidence="1">GMP synthetase</fullName>
    </alternativeName>
    <alternativeName>
        <fullName evidence="1">Glutamine amidotransferase</fullName>
    </alternativeName>
</protein>
<name>GUAA_VIBC3</name>